<sequence length="278" mass="30053">MHNYVIIDAFASVPLEGNPVAVFFDADDLPPAQMQRIAREMNLSESTFVLKPRNGGDALIRIFTPVNELPFAGHPLLGTAIALGAHTDNHRLYLETQMGTIAFELERQNGSVIAASMDQPIPTWTALGRDAELLKALGISDSTFPIEIYHNGPRHVFVGLPSIDALSALHPDHRALSNFHDMAINCFAGAGRRWRSRMFSPAYGVVEDAATGSAAGPLAIHLARHGQIEFGQPVEILQGVEIGRPSLMFAKAEGRAEQLTRVEVSGNGVTFGRGTIVL</sequence>
<organism>
    <name type="scientific">Pseudomonas fluorescens</name>
    <dbReference type="NCBI Taxonomy" id="294"/>
    <lineage>
        <taxon>Bacteria</taxon>
        <taxon>Pseudomonadati</taxon>
        <taxon>Pseudomonadota</taxon>
        <taxon>Gammaproteobacteria</taxon>
        <taxon>Pseudomonadales</taxon>
        <taxon>Pseudomonadaceae</taxon>
        <taxon>Pseudomonas</taxon>
    </lineage>
</organism>
<accession>Q51792</accession>
<gene>
    <name type="primary">phzF</name>
</gene>
<keyword id="KW-0002">3D-structure</keyword>
<keyword id="KW-0045">Antibiotic biosynthesis</keyword>
<keyword id="KW-0413">Isomerase</keyword>
<keyword id="KW-0843">Virulence</keyword>
<name>PHZF_PSEFL</name>
<dbReference type="EC" id="5.3.3.17" evidence="1 2 3"/>
<dbReference type="EMBL" id="L48616">
    <property type="protein sequence ID" value="AAC18905.1"/>
    <property type="molecule type" value="Genomic_DNA"/>
</dbReference>
<dbReference type="RefSeq" id="WP_043050175.1">
    <property type="nucleotide sequence ID" value="NZ_JXCQ01000041.1"/>
</dbReference>
<dbReference type="PDB" id="1T6K">
    <property type="method" value="X-ray"/>
    <property type="resolution" value="1.80 A"/>
    <property type="chains" value="A=1-278"/>
</dbReference>
<dbReference type="PDB" id="1U1V">
    <property type="method" value="X-ray"/>
    <property type="resolution" value="1.70 A"/>
    <property type="chains" value="A=1-278"/>
</dbReference>
<dbReference type="PDB" id="1U1W">
    <property type="method" value="X-ray"/>
    <property type="resolution" value="1.35 A"/>
    <property type="chains" value="A/B=1-278"/>
</dbReference>
<dbReference type="PDB" id="1U1X">
    <property type="method" value="X-ray"/>
    <property type="resolution" value="1.88 A"/>
    <property type="chains" value="A/B=1-278"/>
</dbReference>
<dbReference type="PDB" id="1XUA">
    <property type="method" value="X-ray"/>
    <property type="resolution" value="1.90 A"/>
    <property type="chains" value="A/B=1-278"/>
</dbReference>
<dbReference type="PDB" id="1XUB">
    <property type="method" value="X-ray"/>
    <property type="resolution" value="1.30 A"/>
    <property type="chains" value="A=1-278"/>
</dbReference>
<dbReference type="PDB" id="5IWE">
    <property type="method" value="X-ray"/>
    <property type="resolution" value="1.71 A"/>
    <property type="chains" value="A=1-278"/>
</dbReference>
<dbReference type="PDBsum" id="1T6K"/>
<dbReference type="PDBsum" id="1U1V"/>
<dbReference type="PDBsum" id="1U1W"/>
<dbReference type="PDBsum" id="1U1X"/>
<dbReference type="PDBsum" id="1XUA"/>
<dbReference type="PDBsum" id="1XUB"/>
<dbReference type="PDBsum" id="5IWE"/>
<dbReference type="SMR" id="Q51792"/>
<dbReference type="DrugBank" id="DB02124">
    <property type="generic name" value="(2s,3s)-Trans-2,3-Dihydro-3-Hydroxyanthranilic Acid"/>
</dbReference>
<dbReference type="DrugBank" id="DB03644">
    <property type="generic name" value="3-hydroxyanthranilic acid"/>
</dbReference>
<dbReference type="KEGG" id="ag:AAC18905"/>
<dbReference type="BioCyc" id="MetaCyc:MONOMER-13700"/>
<dbReference type="BRENDA" id="5.3.3.17">
    <property type="organism ID" value="5121"/>
</dbReference>
<dbReference type="UniPathway" id="UPA00099"/>
<dbReference type="EvolutionaryTrace" id="Q51792"/>
<dbReference type="GO" id="GO:0005737">
    <property type="term" value="C:cytoplasm"/>
    <property type="evidence" value="ECO:0007669"/>
    <property type="project" value="TreeGrafter"/>
</dbReference>
<dbReference type="GO" id="GO:0102943">
    <property type="term" value="F:trans-2,3-dihydro-3-hydroxy-anthranilate isomerase activity"/>
    <property type="evidence" value="ECO:0007669"/>
    <property type="project" value="UniProtKB-EC"/>
</dbReference>
<dbReference type="GO" id="GO:0002047">
    <property type="term" value="P:phenazine biosynthetic process"/>
    <property type="evidence" value="ECO:0007669"/>
    <property type="project" value="UniProtKB-UniPathway"/>
</dbReference>
<dbReference type="Gene3D" id="3.10.310.10">
    <property type="entry name" value="Diaminopimelate Epimerase, Chain A, domain 1"/>
    <property type="match status" value="2"/>
</dbReference>
<dbReference type="InterPro" id="IPR003719">
    <property type="entry name" value="Phenazine_PhzF-like"/>
</dbReference>
<dbReference type="NCBIfam" id="TIGR00654">
    <property type="entry name" value="PhzF_family"/>
    <property type="match status" value="1"/>
</dbReference>
<dbReference type="PANTHER" id="PTHR13774:SF32">
    <property type="entry name" value="ANTISENSE-ENHANCING SEQUENCE 1"/>
    <property type="match status" value="1"/>
</dbReference>
<dbReference type="PANTHER" id="PTHR13774">
    <property type="entry name" value="PHENAZINE BIOSYNTHESIS PROTEIN"/>
    <property type="match status" value="1"/>
</dbReference>
<dbReference type="Pfam" id="PF02567">
    <property type="entry name" value="PhzC-PhzF"/>
    <property type="match status" value="1"/>
</dbReference>
<dbReference type="PIRSF" id="PIRSF016184">
    <property type="entry name" value="PhzC_PhzF"/>
    <property type="match status" value="1"/>
</dbReference>
<dbReference type="SUPFAM" id="SSF54506">
    <property type="entry name" value="Diaminopimelate epimerase-like"/>
    <property type="match status" value="1"/>
</dbReference>
<reference key="1">
    <citation type="journal article" date="1998" name="J. Bacteriol.">
        <title>A seven-gene locus for synthesis of phenazine-1-carboxylic acid by Pseudomonas fluorescens 2-79.</title>
        <authorList>
            <person name="Mavrodi D.V."/>
            <person name="Ksenzenko V.N."/>
            <person name="Bonsall R.F."/>
            <person name="Cook R.J."/>
            <person name="Boronin A.M."/>
            <person name="Thomashow L.S."/>
        </authorList>
    </citation>
    <scope>NUCLEOTIDE SEQUENCE [GENOMIC DNA]</scope>
    <source>
        <strain>NRRL B-15132 / 2-79</strain>
    </source>
</reference>
<reference key="2">
    <citation type="journal article" date="2008" name="J. Am. Chem. Soc.">
        <title>PhzA/B catalyzes the formation of the tricycle in phenazine biosynthesis.</title>
        <authorList>
            <person name="Ahuja E.G."/>
            <person name="Janning P."/>
            <person name="Mentel M."/>
            <person name="Graebsch A."/>
            <person name="Breinbauer R."/>
            <person name="Hiller W."/>
            <person name="Costisella B."/>
            <person name="Thomashow L.S."/>
            <person name="Mavrodi D.V."/>
            <person name="Blankenfeldt W."/>
        </authorList>
    </citation>
    <scope>FUNCTION</scope>
    <scope>CATALYTIC ACTIVITY</scope>
</reference>
<reference key="3">
    <citation type="journal article" date="2004" name="Biochemistry">
        <title>Structure and function of the phenazine biosynthesis protein PhzF from Pseudomonas fluorescens 2-79.</title>
        <authorList>
            <person name="Parsons J.F."/>
            <person name="Song F."/>
            <person name="Parsons L."/>
            <person name="Calabrese K."/>
            <person name="Eisenstein E."/>
            <person name="Ladner J.E."/>
        </authorList>
    </citation>
    <scope>X-RAY CRYSTALLOGRAPHY (1.8 ANGSTROMS)</scope>
    <scope>CATALYTIC ACTIVITY</scope>
    <scope>SUBUNIT</scope>
    <source>
        <strain>NRRL B-15132 / 2-79</strain>
    </source>
</reference>
<reference key="4">
    <citation type="journal article" date="2004" name="Proc. Natl. Acad. Sci. U.S.A.">
        <title>Structure and function of the phenazine biosynthetic protein PhzF from Pseudomonas fluorescens.</title>
        <authorList>
            <person name="Blankenfeldt W."/>
            <person name="Kuzin A.P."/>
            <person name="Skarina T."/>
            <person name="Korniyenko Y."/>
            <person name="Tong L."/>
            <person name="Bayer P."/>
            <person name="Janning P."/>
            <person name="Thomashow L.S."/>
            <person name="Mavrodi D.V."/>
        </authorList>
    </citation>
    <scope>X-RAY CRYSTALLOGRAPHY (1.35 ANGSTROMS)</scope>
    <scope>FUNCTION</scope>
    <scope>CATALYTIC ACTIVITY</scope>
    <scope>SUBUNIT</scope>
</reference>
<feature type="chain" id="PRO_0000162382" description="Trans-2,3-dihydro-3-hydroxyanthranilate isomerase">
    <location>
        <begin position="1"/>
        <end position="278"/>
    </location>
</feature>
<feature type="active site">
    <location>
        <position position="45"/>
    </location>
</feature>
<feature type="strand" evidence="5">
    <location>
        <begin position="2"/>
        <end position="9"/>
    </location>
</feature>
<feature type="strand" evidence="5">
    <location>
        <begin position="16"/>
        <end position="23"/>
    </location>
</feature>
<feature type="helix" evidence="5">
    <location>
        <begin position="26"/>
        <end position="28"/>
    </location>
</feature>
<feature type="helix" evidence="5">
    <location>
        <begin position="31"/>
        <end position="41"/>
    </location>
</feature>
<feature type="strand" evidence="5">
    <location>
        <begin position="46"/>
        <end position="50"/>
    </location>
</feature>
<feature type="strand" evidence="5">
    <location>
        <begin position="53"/>
        <end position="63"/>
    </location>
</feature>
<feature type="strand" evidence="5">
    <location>
        <begin position="68"/>
        <end position="70"/>
    </location>
</feature>
<feature type="helix" evidence="5">
    <location>
        <begin position="73"/>
        <end position="84"/>
    </location>
</feature>
<feature type="strand" evidence="5">
    <location>
        <begin position="90"/>
        <end position="96"/>
    </location>
</feature>
<feature type="strand" evidence="5">
    <location>
        <begin position="99"/>
        <end position="108"/>
    </location>
</feature>
<feature type="strand" evidence="5">
    <location>
        <begin position="111"/>
        <end position="118"/>
    </location>
</feature>
<feature type="strand" evidence="5">
    <location>
        <begin position="123"/>
        <end position="126"/>
    </location>
</feature>
<feature type="helix" evidence="5">
    <location>
        <begin position="130"/>
        <end position="137"/>
    </location>
</feature>
<feature type="strand" evidence="5">
    <location>
        <begin position="147"/>
        <end position="159"/>
    </location>
</feature>
<feature type="helix" evidence="5">
    <location>
        <begin position="163"/>
        <end position="168"/>
    </location>
</feature>
<feature type="helix" evidence="5">
    <location>
        <begin position="173"/>
        <end position="176"/>
    </location>
</feature>
<feature type="strand" evidence="5">
    <location>
        <begin position="183"/>
        <end position="190"/>
    </location>
</feature>
<feature type="strand" evidence="5">
    <location>
        <begin position="193"/>
        <end position="200"/>
    </location>
</feature>
<feature type="helix" evidence="5">
    <location>
        <begin position="201"/>
        <end position="203"/>
    </location>
</feature>
<feature type="strand" evidence="5">
    <location>
        <begin position="205"/>
        <end position="207"/>
    </location>
</feature>
<feature type="helix" evidence="5">
    <location>
        <begin position="212"/>
        <end position="224"/>
    </location>
</feature>
<feature type="strand" evidence="5">
    <location>
        <begin position="234"/>
        <end position="238"/>
    </location>
</feature>
<feature type="helix" evidence="5">
    <location>
        <begin position="240"/>
        <end position="242"/>
    </location>
</feature>
<feature type="strand" evidence="5">
    <location>
        <begin position="246"/>
        <end position="255"/>
    </location>
</feature>
<feature type="strand" evidence="5">
    <location>
        <begin position="258"/>
        <end position="276"/>
    </location>
</feature>
<protein>
    <recommendedName>
        <fullName>Trans-2,3-dihydro-3-hydroxyanthranilate isomerase</fullName>
        <ecNumber evidence="1 2 3">5.3.3.17</ecNumber>
    </recommendedName>
    <alternativeName>
        <fullName>Phenazine/pyocyanine biosynthesis protein PhzF</fullName>
    </alternativeName>
</protein>
<proteinExistence type="evidence at protein level"/>
<comment type="function">
    <text evidence="2 3">Isomerase that catalyzes the condensation of two molecules of trans-2,3-dihydro-3-hydroxyanthranilic acid (DHHA) into the phenazine ring system. The final product is not yet known.</text>
</comment>
<comment type="catalytic activity">
    <reaction evidence="1 2 3">
        <text>(5S,6S)-6-amino-5-hydroxycyclohexa-1,3-diene-1-carboxyate = (1R,6S)-6-amino-5-oxocyclohex-2-ene-1-carboxylate</text>
        <dbReference type="Rhea" id="RHEA:28182"/>
        <dbReference type="ChEBI" id="CHEBI:60849"/>
        <dbReference type="ChEBI" id="CHEBI:60862"/>
        <dbReference type="EC" id="5.3.3.17"/>
    </reaction>
</comment>
<comment type="pathway">
    <text>Antibiotic biosynthesis; phenazine biosynthesis.</text>
</comment>
<comment type="subunit">
    <text evidence="1 2">Homodimer.</text>
</comment>
<comment type="similarity">
    <text evidence="4">Belongs to the PhzF family.</text>
</comment>
<evidence type="ECO:0000269" key="1">
    <source>
    </source>
</evidence>
<evidence type="ECO:0000269" key="2">
    <source>
    </source>
</evidence>
<evidence type="ECO:0000269" key="3">
    <source>
    </source>
</evidence>
<evidence type="ECO:0000305" key="4"/>
<evidence type="ECO:0007829" key="5">
    <source>
        <dbReference type="PDB" id="1XUB"/>
    </source>
</evidence>